<sequence length="382" mass="42297">MLKVLISAGEASGEMYGAALLDALRKLSPDPVEAFGLGGEKMRAAGCDIIVDSKDVAVVGIAEVVAHLPRIYGEFHKLLREADRRKPDVAVLIDFPDFHFRLAKALHARGIPVVYYVSPQLWAWRRGRIKLVQRYVKKMLVIFPFEEQFYREHNVEAEFTGHPLGELSVTVDPRTEFAVRYGLDPAKPWVGILPGSRRKEVQMILPTLIDAAKKLGPANEYLLPVASTLDAGWMQAQLLAIPQPPRVTLTSDARQTLVQSRAAMVASGTATVEASVLGTPFVMVYRVAPLSWRVGRRLVKLDRFAMPNLIAGREVVRELVQENFTADKVAAEVSALIEDGPRRAQVLKNLAEVREHLQSGRTNESAAERAARSVLSVAQRKD</sequence>
<comment type="function">
    <text evidence="1">Condensation of UDP-2,3-diacylglucosamine and 2,3-diacylglucosamine-1-phosphate to form lipid A disaccharide, a precursor of lipid A, a phosphorylated glycolipid that anchors the lipopolysaccharide to the outer membrane of the cell.</text>
</comment>
<comment type="catalytic activity">
    <reaction evidence="1">
        <text>a lipid X + a UDP-2-N,3-O-bis[(3R)-3-hydroxyacyl]-alpha-D-glucosamine = a lipid A disaccharide + UDP + H(+)</text>
        <dbReference type="Rhea" id="RHEA:67828"/>
        <dbReference type="ChEBI" id="CHEBI:15378"/>
        <dbReference type="ChEBI" id="CHEBI:58223"/>
        <dbReference type="ChEBI" id="CHEBI:137748"/>
        <dbReference type="ChEBI" id="CHEBI:176338"/>
        <dbReference type="ChEBI" id="CHEBI:176343"/>
        <dbReference type="EC" id="2.4.1.182"/>
    </reaction>
</comment>
<comment type="pathway">
    <text evidence="1">Bacterial outer membrane biogenesis; LPS lipid A biosynthesis.</text>
</comment>
<comment type="similarity">
    <text evidence="1">Belongs to the LpxB family.</text>
</comment>
<protein>
    <recommendedName>
        <fullName evidence="1">Lipid-A-disaccharide synthase</fullName>
        <ecNumber evidence="1">2.4.1.182</ecNumber>
    </recommendedName>
</protein>
<proteinExistence type="inferred from homology"/>
<evidence type="ECO:0000255" key="1">
    <source>
        <dbReference type="HAMAP-Rule" id="MF_00392"/>
    </source>
</evidence>
<organism>
    <name type="scientific">Koribacter versatilis (strain Ellin345)</name>
    <dbReference type="NCBI Taxonomy" id="204669"/>
    <lineage>
        <taxon>Bacteria</taxon>
        <taxon>Pseudomonadati</taxon>
        <taxon>Acidobacteriota</taxon>
        <taxon>Terriglobia</taxon>
        <taxon>Terriglobales</taxon>
        <taxon>Candidatus Korobacteraceae</taxon>
        <taxon>Candidatus Korobacter</taxon>
    </lineage>
</organism>
<accession>Q1INL4</accession>
<keyword id="KW-0328">Glycosyltransferase</keyword>
<keyword id="KW-0441">Lipid A biosynthesis</keyword>
<keyword id="KW-0444">Lipid biosynthesis</keyword>
<keyword id="KW-0443">Lipid metabolism</keyword>
<keyword id="KW-1185">Reference proteome</keyword>
<keyword id="KW-0808">Transferase</keyword>
<feature type="chain" id="PRO_0000255156" description="Lipid-A-disaccharide synthase">
    <location>
        <begin position="1"/>
        <end position="382"/>
    </location>
</feature>
<gene>
    <name evidence="1" type="primary">lpxB</name>
    <name type="ordered locus">Acid345_2535</name>
</gene>
<reference key="1">
    <citation type="journal article" date="2009" name="Appl. Environ. Microbiol.">
        <title>Three genomes from the phylum Acidobacteria provide insight into the lifestyles of these microorganisms in soils.</title>
        <authorList>
            <person name="Ward N.L."/>
            <person name="Challacombe J.F."/>
            <person name="Janssen P.H."/>
            <person name="Henrissat B."/>
            <person name="Coutinho P.M."/>
            <person name="Wu M."/>
            <person name="Xie G."/>
            <person name="Haft D.H."/>
            <person name="Sait M."/>
            <person name="Badger J."/>
            <person name="Barabote R.D."/>
            <person name="Bradley B."/>
            <person name="Brettin T.S."/>
            <person name="Brinkac L.M."/>
            <person name="Bruce D."/>
            <person name="Creasy T."/>
            <person name="Daugherty S.C."/>
            <person name="Davidsen T.M."/>
            <person name="DeBoy R.T."/>
            <person name="Detter J.C."/>
            <person name="Dodson R.J."/>
            <person name="Durkin A.S."/>
            <person name="Ganapathy A."/>
            <person name="Gwinn-Giglio M."/>
            <person name="Han C.S."/>
            <person name="Khouri H."/>
            <person name="Kiss H."/>
            <person name="Kothari S.P."/>
            <person name="Madupu R."/>
            <person name="Nelson K.E."/>
            <person name="Nelson W.C."/>
            <person name="Paulsen I."/>
            <person name="Penn K."/>
            <person name="Ren Q."/>
            <person name="Rosovitz M.J."/>
            <person name="Selengut J.D."/>
            <person name="Shrivastava S."/>
            <person name="Sullivan S.A."/>
            <person name="Tapia R."/>
            <person name="Thompson L.S."/>
            <person name="Watkins K.L."/>
            <person name="Yang Q."/>
            <person name="Yu C."/>
            <person name="Zafar N."/>
            <person name="Zhou L."/>
            <person name="Kuske C.R."/>
        </authorList>
    </citation>
    <scope>NUCLEOTIDE SEQUENCE [LARGE SCALE GENOMIC DNA]</scope>
    <source>
        <strain>Ellin345</strain>
    </source>
</reference>
<dbReference type="EC" id="2.4.1.182" evidence="1"/>
<dbReference type="EMBL" id="CP000360">
    <property type="protein sequence ID" value="ABF41536.1"/>
    <property type="molecule type" value="Genomic_DNA"/>
</dbReference>
<dbReference type="RefSeq" id="WP_011523337.1">
    <property type="nucleotide sequence ID" value="NC_008009.1"/>
</dbReference>
<dbReference type="SMR" id="Q1INL4"/>
<dbReference type="STRING" id="204669.Acid345_2535"/>
<dbReference type="CAZy" id="GT19">
    <property type="family name" value="Glycosyltransferase Family 19"/>
</dbReference>
<dbReference type="EnsemblBacteria" id="ABF41536">
    <property type="protein sequence ID" value="ABF41536"/>
    <property type="gene ID" value="Acid345_2535"/>
</dbReference>
<dbReference type="KEGG" id="aba:Acid345_2535"/>
<dbReference type="eggNOG" id="COG0763">
    <property type="taxonomic scope" value="Bacteria"/>
</dbReference>
<dbReference type="HOGENOM" id="CLU_036577_3_1_0"/>
<dbReference type="OrthoDB" id="9801642at2"/>
<dbReference type="UniPathway" id="UPA00973"/>
<dbReference type="Proteomes" id="UP000002432">
    <property type="component" value="Chromosome"/>
</dbReference>
<dbReference type="GO" id="GO:0016020">
    <property type="term" value="C:membrane"/>
    <property type="evidence" value="ECO:0007669"/>
    <property type="project" value="GOC"/>
</dbReference>
<dbReference type="GO" id="GO:0008915">
    <property type="term" value="F:lipid-A-disaccharide synthase activity"/>
    <property type="evidence" value="ECO:0007669"/>
    <property type="project" value="UniProtKB-UniRule"/>
</dbReference>
<dbReference type="GO" id="GO:0005543">
    <property type="term" value="F:phospholipid binding"/>
    <property type="evidence" value="ECO:0007669"/>
    <property type="project" value="TreeGrafter"/>
</dbReference>
<dbReference type="GO" id="GO:0009245">
    <property type="term" value="P:lipid A biosynthetic process"/>
    <property type="evidence" value="ECO:0007669"/>
    <property type="project" value="UniProtKB-UniRule"/>
</dbReference>
<dbReference type="HAMAP" id="MF_00392">
    <property type="entry name" value="LpxB"/>
    <property type="match status" value="1"/>
</dbReference>
<dbReference type="InterPro" id="IPR003835">
    <property type="entry name" value="Glyco_trans_19"/>
</dbReference>
<dbReference type="NCBIfam" id="TIGR00215">
    <property type="entry name" value="lpxB"/>
    <property type="match status" value="1"/>
</dbReference>
<dbReference type="PANTHER" id="PTHR30372">
    <property type="entry name" value="LIPID-A-DISACCHARIDE SYNTHASE"/>
    <property type="match status" value="1"/>
</dbReference>
<dbReference type="PANTHER" id="PTHR30372:SF4">
    <property type="entry name" value="LIPID-A-DISACCHARIDE SYNTHASE, MITOCHONDRIAL-RELATED"/>
    <property type="match status" value="1"/>
</dbReference>
<dbReference type="Pfam" id="PF02684">
    <property type="entry name" value="LpxB"/>
    <property type="match status" value="1"/>
</dbReference>
<dbReference type="SUPFAM" id="SSF53756">
    <property type="entry name" value="UDP-Glycosyltransferase/glycogen phosphorylase"/>
    <property type="match status" value="1"/>
</dbReference>
<name>LPXB_KORVE</name>